<reference key="1">
    <citation type="journal article" date="1998" name="Development">
        <title>The polycomb group in Caenorhabditis elegans and maternal control of germline development.</title>
        <authorList>
            <person name="Korf I."/>
            <person name="Fan Y."/>
            <person name="Strome S."/>
        </authorList>
    </citation>
    <scope>NUCLEOTIDE SEQUENCE [GENOMIC DNA]</scope>
    <scope>CHARACTERIZATION</scope>
    <scope>DEVELOPMENTAL STAGE</scope>
    <scope>MUTAGENESIS OF GLY-188</scope>
    <source>
        <strain>Bristol N2</strain>
    </source>
</reference>
<reference key="2">
    <citation type="journal article" date="1998" name="Science">
        <title>Genome sequence of the nematode C. elegans: a platform for investigating biology.</title>
        <authorList>
            <consortium name="The C. elegans sequencing consortium"/>
        </authorList>
    </citation>
    <scope>NUCLEOTIDE SEQUENCE [LARGE SCALE GENOMIC DNA]</scope>
    <source>
        <strain>Bristol N2</strain>
    </source>
</reference>
<reference key="3">
    <citation type="journal article" date="2001" name="Proc. Natl. Acad. Sci. U.S.A.">
        <title>The Caenorhabditis elegans maternal-effect sterile proteins, MES-2, MES-3, and MES-6, are associated in a complex in embryos.</title>
        <authorList>
            <person name="Xu L."/>
            <person name="Fong Y."/>
            <person name="Strome S."/>
        </authorList>
    </citation>
    <scope>IDENTIFICATION IN A COMPLEX WITH MES-2 AND MES-3</scope>
</reference>
<reference key="4">
    <citation type="journal article" date="2002" name="Science">
        <title>Regulation of the different chromatin states of autosomes and X chromosomes in the germ line of C. elegans.</title>
        <authorList>
            <person name="Fong Y."/>
            <person name="Bender L."/>
            <person name="Wang W."/>
            <person name="Strome S."/>
        </authorList>
    </citation>
    <scope>FUNCTION</scope>
</reference>
<reference key="5">
    <citation type="journal article" date="2004" name="Curr. Biol.">
        <title>The MES-2/MES-3/MES-6 complex and regulation of histone H3 methylation in C. elegans.</title>
        <authorList>
            <person name="Bender L.B."/>
            <person name="Cao R."/>
            <person name="Zhang Y."/>
            <person name="Strome S."/>
        </authorList>
    </citation>
    <scope>FUNCTION</scope>
    <scope>IDENTIFICATION IN A COMPLEX WITH MES-2 AND MES-3</scope>
</reference>
<reference key="6">
    <citation type="journal article" date="2007" name="Dev. Biol.">
        <title>Transcription factor NFY globally represses the expression of the C. elegans Hox gene Abdominal-B homolog egl-5.</title>
        <authorList>
            <person name="Deng H."/>
            <person name="Sun Y."/>
            <person name="Zhang Y."/>
            <person name="Luo X."/>
            <person name="Hou W."/>
            <person name="Yan L."/>
            <person name="Chen Y."/>
            <person name="Tian E."/>
            <person name="Han J."/>
            <person name="Zhang H."/>
        </authorList>
    </citation>
    <scope>FUNCTION</scope>
    <scope>DISRUPTION PHENOTYPE</scope>
</reference>
<reference key="7">
    <citation type="journal article" date="2015" name="Curr. Biol.">
        <title>The Nrde pathway mediates small-RNA-directed histone H3 lysine 27 trimethylation in Caenorhabditis elegans.</title>
        <authorList>
            <person name="Mao H."/>
            <person name="Zhu C."/>
            <person name="Zong D."/>
            <person name="Weng C."/>
            <person name="Yang X."/>
            <person name="Huang H."/>
            <person name="Liu D."/>
            <person name="Feng X."/>
            <person name="Guang S."/>
        </authorList>
    </citation>
    <scope>FUNCTION</scope>
</reference>
<proteinExistence type="evidence at protein level"/>
<evidence type="ECO:0000269" key="1">
    <source>
    </source>
</evidence>
<evidence type="ECO:0000269" key="2">
    <source>
    </source>
</evidence>
<evidence type="ECO:0000269" key="3">
    <source>
    </source>
</evidence>
<evidence type="ECO:0000269" key="4">
    <source>
    </source>
</evidence>
<evidence type="ECO:0000269" key="5">
    <source>
    </source>
</evidence>
<evidence type="ECO:0000269" key="6">
    <source>
    </source>
</evidence>
<evidence type="ECO:0000305" key="7"/>
<evidence type="ECO:0000312" key="8">
    <source>
        <dbReference type="WormBase" id="C09G4.5"/>
    </source>
</evidence>
<name>MES6_CAEEL</name>
<protein>
    <recommendedName>
        <fullName>Polycomb protein mes-6</fullName>
    </recommendedName>
    <alternativeName>
        <fullName>ESC homolog</fullName>
    </alternativeName>
    <alternativeName>
        <fullName>Maternal-effect sterile protein 6</fullName>
    </alternativeName>
</protein>
<accession>Q9GYS1</accession>
<accession>O16187</accession>
<organism>
    <name type="scientific">Caenorhabditis elegans</name>
    <dbReference type="NCBI Taxonomy" id="6239"/>
    <lineage>
        <taxon>Eukaryota</taxon>
        <taxon>Metazoa</taxon>
        <taxon>Ecdysozoa</taxon>
        <taxon>Nematoda</taxon>
        <taxon>Chromadorea</taxon>
        <taxon>Rhabditida</taxon>
        <taxon>Rhabditina</taxon>
        <taxon>Rhabditomorpha</taxon>
        <taxon>Rhabditoidea</taxon>
        <taxon>Rhabditidae</taxon>
        <taxon>Peloderinae</taxon>
        <taxon>Caenorhabditis</taxon>
    </lineage>
</organism>
<comment type="function">
    <text evidence="2 3 4 5">Polycomb group (PcG) protein. PcG proteins act by forming multiprotein complexes, which are required to maintain the transcriptionally repressive state of homeotic genes throughout development. In association with the nfya-1-NF-Y complex, may play a role in repressing the expression of the homeobox protein egl-5 in tissues such as the head (PubMed:17574230). PcG proteins are not required to initiate repression, but to maintain it during later stages of development. The mes-2/mes-3/mes-6 complex may participate in the global inactivation of the X chromosomes in germline cells. The complex may act via methylation of histone H3 'Lys-27', rendering chromatin heritably changed in its expressibility. This complex is required to exclude mes-4 from the inactivated X-chromosomes in germline cells (PubMed:12077420, PubMed:15380065). Required for small-RNA-induced H3K27 trimethylation (PubMed:26365259).</text>
</comment>
<comment type="subunit">
    <text evidence="1 3">Interacts directly with the N-terminal domain of mes-2. Forms a heterotrimeric complex with mes-2 and mes-3. Does not interact with mes-4.</text>
</comment>
<comment type="interaction">
    <interactant intactId="EBI-314965">
        <id>Q9GYS1</id>
    </interactant>
    <interactant intactId="EBI-11615731">
        <id>O17514</id>
        <label>mes-2</label>
    </interactant>
    <organismsDiffer>false</organismsDiffer>
    <experiments>5</experiments>
</comment>
<comment type="subcellular location">
    <subcellularLocation>
        <location>Nucleus</location>
    </subcellularLocation>
</comment>
<comment type="tissue specificity">
    <text>In adults, it is predominantly expressed in the germline, and weakly expressed in intestinal cells.</text>
</comment>
<comment type="developmental stage">
    <text evidence="6">Expressed both maternally and zygotically. Expressed in all cells of early embryos. In late embryos and L1 larva, it is weakly expressed.</text>
</comment>
<comment type="disruption phenotype">
    <text evidence="4">Double RNAi-mediated knockdown together with mes-2 RNAi results in ectopic expression of the homeobox protein egl-5 in the head region (PubMed:17574230). This ectopic expression of egl-5 in the head region is enhanced in a nfya-1 bp4 mutant background (PubMed:17574230). In addition in this background in males, there is ectopic expression of egl-5 in the mid-body region including in seam cells and hypodermal nuclei, and there is ectopic ray formation (PubMed:17574230).</text>
</comment>
<comment type="similarity">
    <text evidence="7">Belongs to the WD repeat ESC family.</text>
</comment>
<feature type="chain" id="PRO_0000051076" description="Polycomb protein mes-6">
    <location>
        <begin position="1"/>
        <end position="459"/>
    </location>
</feature>
<feature type="repeat" description="WD 1">
    <location>
        <begin position="146"/>
        <end position="186"/>
    </location>
</feature>
<feature type="repeat" description="WD 2">
    <location>
        <begin position="192"/>
        <end position="231"/>
    </location>
</feature>
<feature type="repeat" description="WD 3">
    <location>
        <begin position="305"/>
        <end position="346"/>
    </location>
</feature>
<feature type="repeat" description="WD 4">
    <location>
        <begin position="370"/>
        <end position="409"/>
    </location>
</feature>
<feature type="repeat" description="WD 5">
    <location>
        <begin position="415"/>
        <end position="454"/>
    </location>
</feature>
<feature type="mutagenesis site" description="In BN66; maternal-effect mutation. Progeny show defects in gonad proliferation. Germ cell degeneration." evidence="6">
    <original>G</original>
    <variation>E</variation>
    <location>
        <position position="188"/>
    </location>
</feature>
<sequence length="459" mass="51823">MEHTKKFKSLNLHGFDRSTEDYGKRPFVLTAKLLEDQKKAIYGCAFNQYAGIDEEQAVATVGGSFLHMYSVPIDINNIELQWSCNFPTDKSSKVEREESLFTVTWCYDTYEAENDRNPFKVVTGGTLGHIYVIDYVSRKLSNRLRSVGWEINDIRTCPANSNLIVCASSDQSIRIHHIRNEACLIVIGGLECHAGTILSVDWSTDGDFILSCGFDHQLMEWDLSVKQVKEHLERACKALHQDKINVLTQSQDIPYVSKGTMRKSAVSRNIPDKEEDQLLELHRELIPRPSCLLPIYTPSSVSTDMHSDYVDCIRFLIGTNYALSKGCGNEKAIHFWRFGPPKGEVENRIHGNVLRPKSCTTKFRTMNVPSGSAWFIKFAVDPRRRWLVCGGAGGSVMFFDLRNNEETNPTHTCSVGSRTVRQASFSTCGRFLVLVTDEGFVCRFDRVSASVDAKDLAKF</sequence>
<dbReference type="EMBL" id="AF016224">
    <property type="protein sequence ID" value="AAC27121.1"/>
    <property type="molecule type" value="Genomic_DNA"/>
</dbReference>
<dbReference type="EMBL" id="BX284604">
    <property type="protein sequence ID" value="CCD64001.1"/>
    <property type="molecule type" value="Genomic_DNA"/>
</dbReference>
<dbReference type="RefSeq" id="NP_001021320.1">
    <property type="nucleotide sequence ID" value="NM_001026149.4"/>
</dbReference>
<dbReference type="RefSeq" id="NP_001370414.1">
    <property type="nucleotide sequence ID" value="NM_001383148.2"/>
</dbReference>
<dbReference type="SMR" id="Q9GYS1"/>
<dbReference type="BioGRID" id="42769">
    <property type="interactions" value="13"/>
</dbReference>
<dbReference type="ComplexPortal" id="CPX-368">
    <property type="entry name" value="Polycomb Repressive Complex 2"/>
</dbReference>
<dbReference type="FunCoup" id="Q9GYS1">
    <property type="interactions" value="2817"/>
</dbReference>
<dbReference type="IntAct" id="Q9GYS1">
    <property type="interactions" value="2"/>
</dbReference>
<dbReference type="STRING" id="6239.C09G4.5.1"/>
<dbReference type="PaxDb" id="6239-C09G4.5"/>
<dbReference type="PeptideAtlas" id="Q9GYS1"/>
<dbReference type="EnsemblMetazoa" id="C09G4.5.1">
    <property type="protein sequence ID" value="C09G4.5.1"/>
    <property type="gene ID" value="WBGene00003224"/>
</dbReference>
<dbReference type="GeneID" id="177657"/>
<dbReference type="UCSC" id="C09G4.5">
    <property type="organism name" value="c. elegans"/>
</dbReference>
<dbReference type="AGR" id="WB:WBGene00003224"/>
<dbReference type="WormBase" id="C09G4.5">
    <property type="protein sequence ID" value="CE24796"/>
    <property type="gene ID" value="WBGene00003224"/>
    <property type="gene designation" value="mes-6"/>
</dbReference>
<dbReference type="eggNOG" id="KOG1034">
    <property type="taxonomic scope" value="Eukaryota"/>
</dbReference>
<dbReference type="GeneTree" id="ENSGT00510000047334"/>
<dbReference type="HOGENOM" id="CLU_032683_4_1_1"/>
<dbReference type="InParanoid" id="Q9GYS1"/>
<dbReference type="OMA" id="HPLHAIG"/>
<dbReference type="OrthoDB" id="7318948at2759"/>
<dbReference type="PhylomeDB" id="Q9GYS1"/>
<dbReference type="Reactome" id="R-CEL-2559580">
    <property type="pathway name" value="Oxidative Stress Induced Senescence"/>
</dbReference>
<dbReference type="Reactome" id="R-CEL-8943724">
    <property type="pathway name" value="Regulation of PTEN gene transcription"/>
</dbReference>
<dbReference type="PRO" id="PR:Q9GYS1"/>
<dbReference type="Proteomes" id="UP000001940">
    <property type="component" value="Chromosome IV"/>
</dbReference>
<dbReference type="Bgee" id="WBGene00003224">
    <property type="expression patterns" value="Expressed in embryo and 3 other cell types or tissues"/>
</dbReference>
<dbReference type="GO" id="GO:0035098">
    <property type="term" value="C:ESC/E(Z) complex"/>
    <property type="evidence" value="ECO:0000318"/>
    <property type="project" value="GO_Central"/>
</dbReference>
<dbReference type="GO" id="GO:0000786">
    <property type="term" value="C:nucleosome"/>
    <property type="evidence" value="ECO:0000314"/>
    <property type="project" value="WormBase"/>
</dbReference>
<dbReference type="GO" id="GO:0031519">
    <property type="term" value="C:PcG protein complex"/>
    <property type="evidence" value="ECO:0000353"/>
    <property type="project" value="WormBase"/>
</dbReference>
<dbReference type="GO" id="GO:0031507">
    <property type="term" value="P:heterochromatin formation"/>
    <property type="evidence" value="ECO:0000318"/>
    <property type="project" value="GO_Central"/>
</dbReference>
<dbReference type="GO" id="GO:0010629">
    <property type="term" value="P:negative regulation of gene expression"/>
    <property type="evidence" value="ECO:0000314"/>
    <property type="project" value="ComplexPortal"/>
</dbReference>
<dbReference type="GO" id="GO:0000122">
    <property type="term" value="P:negative regulation of transcription by RNA polymerase II"/>
    <property type="evidence" value="ECO:0000318"/>
    <property type="project" value="GO_Central"/>
</dbReference>
<dbReference type="GO" id="GO:0010468">
    <property type="term" value="P:regulation of gene expression"/>
    <property type="evidence" value="ECO:0000315"/>
    <property type="project" value="UniProtKB"/>
</dbReference>
<dbReference type="Gene3D" id="2.130.10.10">
    <property type="entry name" value="YVTN repeat-like/Quinoprotein amine dehydrogenase"/>
    <property type="match status" value="1"/>
</dbReference>
<dbReference type="InterPro" id="IPR051243">
    <property type="entry name" value="PcG_WD-repeat"/>
</dbReference>
<dbReference type="InterPro" id="IPR015943">
    <property type="entry name" value="WD40/YVTN_repeat-like_dom_sf"/>
</dbReference>
<dbReference type="InterPro" id="IPR036322">
    <property type="entry name" value="WD40_repeat_dom_sf"/>
</dbReference>
<dbReference type="InterPro" id="IPR001680">
    <property type="entry name" value="WD40_rpt"/>
</dbReference>
<dbReference type="PANTHER" id="PTHR10253">
    <property type="entry name" value="POLYCOMB PROTEIN"/>
    <property type="match status" value="1"/>
</dbReference>
<dbReference type="Pfam" id="PF00400">
    <property type="entry name" value="WD40"/>
    <property type="match status" value="1"/>
</dbReference>
<dbReference type="SMART" id="SM00320">
    <property type="entry name" value="WD40"/>
    <property type="match status" value="4"/>
</dbReference>
<dbReference type="SUPFAM" id="SSF50978">
    <property type="entry name" value="WD40 repeat-like"/>
    <property type="match status" value="1"/>
</dbReference>
<dbReference type="PROSITE" id="PS50082">
    <property type="entry name" value="WD_REPEATS_2"/>
    <property type="match status" value="1"/>
</dbReference>
<dbReference type="PROSITE" id="PS50294">
    <property type="entry name" value="WD_REPEATS_REGION"/>
    <property type="match status" value="1"/>
</dbReference>
<keyword id="KW-0217">Developmental protein</keyword>
<keyword id="KW-0539">Nucleus</keyword>
<keyword id="KW-1185">Reference proteome</keyword>
<keyword id="KW-0677">Repeat</keyword>
<keyword id="KW-0678">Repressor</keyword>
<keyword id="KW-0804">Transcription</keyword>
<keyword id="KW-0805">Transcription regulation</keyword>
<keyword id="KW-0853">WD repeat</keyword>
<gene>
    <name evidence="8" type="primary">mes-6</name>
    <name evidence="8" type="ORF">C09G4.5</name>
</gene>